<proteinExistence type="inferred from homology"/>
<comment type="function">
    <text evidence="1">Catalyzes the hydrolysis of 6-phosphogluconolactone to 6-phosphogluconate.</text>
</comment>
<comment type="catalytic activity">
    <reaction evidence="1">
        <text>6-phospho-D-glucono-1,5-lactone + H2O = 6-phospho-D-gluconate + H(+)</text>
        <dbReference type="Rhea" id="RHEA:12556"/>
        <dbReference type="ChEBI" id="CHEBI:15377"/>
        <dbReference type="ChEBI" id="CHEBI:15378"/>
        <dbReference type="ChEBI" id="CHEBI:57955"/>
        <dbReference type="ChEBI" id="CHEBI:58759"/>
        <dbReference type="EC" id="3.1.1.31"/>
    </reaction>
</comment>
<comment type="pathway">
    <text evidence="1">Carbohydrate degradation; pentose phosphate pathway; D-ribulose 5-phosphate from D-glucose 6-phosphate (oxidative stage): step 2/3.</text>
</comment>
<comment type="similarity">
    <text evidence="1">Belongs to the cycloisomerase 2 family.</text>
</comment>
<dbReference type="EC" id="3.1.1.31" evidence="1"/>
<dbReference type="EMBL" id="CP000247">
    <property type="protein sequence ID" value="ABG68798.1"/>
    <property type="molecule type" value="Genomic_DNA"/>
</dbReference>
<dbReference type="RefSeq" id="WP_000815434.1">
    <property type="nucleotide sequence ID" value="NC_008253.1"/>
</dbReference>
<dbReference type="SMR" id="Q0TJT3"/>
<dbReference type="KEGG" id="ecp:ECP_0779"/>
<dbReference type="HOGENOM" id="CLU_038716_2_0_6"/>
<dbReference type="UniPathway" id="UPA00115">
    <property type="reaction ID" value="UER00409"/>
</dbReference>
<dbReference type="Proteomes" id="UP000009182">
    <property type="component" value="Chromosome"/>
</dbReference>
<dbReference type="GO" id="GO:0005829">
    <property type="term" value="C:cytosol"/>
    <property type="evidence" value="ECO:0007669"/>
    <property type="project" value="TreeGrafter"/>
</dbReference>
<dbReference type="GO" id="GO:0017057">
    <property type="term" value="F:6-phosphogluconolactonase activity"/>
    <property type="evidence" value="ECO:0007669"/>
    <property type="project" value="UniProtKB-UniRule"/>
</dbReference>
<dbReference type="GO" id="GO:0006006">
    <property type="term" value="P:glucose metabolic process"/>
    <property type="evidence" value="ECO:0007669"/>
    <property type="project" value="UniProtKB-KW"/>
</dbReference>
<dbReference type="GO" id="GO:0009051">
    <property type="term" value="P:pentose-phosphate shunt, oxidative branch"/>
    <property type="evidence" value="ECO:0007669"/>
    <property type="project" value="UniProtKB-UniRule"/>
</dbReference>
<dbReference type="FunFam" id="2.130.10.10:FF:000051">
    <property type="entry name" value="6-phosphogluconolactonase"/>
    <property type="match status" value="1"/>
</dbReference>
<dbReference type="Gene3D" id="2.130.10.10">
    <property type="entry name" value="YVTN repeat-like/Quinoprotein amine dehydrogenase"/>
    <property type="match status" value="1"/>
</dbReference>
<dbReference type="HAMAP" id="MF_01605">
    <property type="entry name" value="6P_gluconolactonase"/>
    <property type="match status" value="1"/>
</dbReference>
<dbReference type="InterPro" id="IPR022528">
    <property type="entry name" value="6-phosphogluconolactonase_YbhE"/>
</dbReference>
<dbReference type="InterPro" id="IPR050282">
    <property type="entry name" value="Cycloisomerase_2"/>
</dbReference>
<dbReference type="InterPro" id="IPR019405">
    <property type="entry name" value="Lactonase_7-beta_prop"/>
</dbReference>
<dbReference type="InterPro" id="IPR011045">
    <property type="entry name" value="N2O_reductase_N"/>
</dbReference>
<dbReference type="InterPro" id="IPR015943">
    <property type="entry name" value="WD40/YVTN_repeat-like_dom_sf"/>
</dbReference>
<dbReference type="NCBIfam" id="NF008258">
    <property type="entry name" value="PRK11028.1"/>
    <property type="match status" value="1"/>
</dbReference>
<dbReference type="PANTHER" id="PTHR30344:SF1">
    <property type="entry name" value="6-PHOSPHOGLUCONOLACTONASE"/>
    <property type="match status" value="1"/>
</dbReference>
<dbReference type="PANTHER" id="PTHR30344">
    <property type="entry name" value="6-PHOSPHOGLUCONOLACTONASE-RELATED"/>
    <property type="match status" value="1"/>
</dbReference>
<dbReference type="Pfam" id="PF10282">
    <property type="entry name" value="Lactonase"/>
    <property type="match status" value="1"/>
</dbReference>
<dbReference type="SUPFAM" id="SSF50974">
    <property type="entry name" value="Nitrous oxide reductase, N-terminal domain"/>
    <property type="match status" value="1"/>
</dbReference>
<keyword id="KW-0007">Acetylation</keyword>
<keyword id="KW-0119">Carbohydrate metabolism</keyword>
<keyword id="KW-0313">Glucose metabolism</keyword>
<keyword id="KW-0378">Hydrolase</keyword>
<feature type="chain" id="PRO_0000291467" description="6-phosphogluconolactonase">
    <location>
        <begin position="1"/>
        <end position="331"/>
    </location>
</feature>
<feature type="modified residue" description="N6-acetyllysine" evidence="1">
    <location>
        <position position="287"/>
    </location>
</feature>
<reference key="1">
    <citation type="journal article" date="2006" name="Mol. Microbiol.">
        <title>Role of pathogenicity island-associated integrases in the genome plasticity of uropathogenic Escherichia coli strain 536.</title>
        <authorList>
            <person name="Hochhut B."/>
            <person name="Wilde C."/>
            <person name="Balling G."/>
            <person name="Middendorf B."/>
            <person name="Dobrindt U."/>
            <person name="Brzuszkiewicz E."/>
            <person name="Gottschalk G."/>
            <person name="Carniel E."/>
            <person name="Hacker J."/>
        </authorList>
    </citation>
    <scope>NUCLEOTIDE SEQUENCE [LARGE SCALE GENOMIC DNA]</scope>
    <source>
        <strain>536 / UPEC</strain>
    </source>
</reference>
<organism>
    <name type="scientific">Escherichia coli O6:K15:H31 (strain 536 / UPEC)</name>
    <dbReference type="NCBI Taxonomy" id="362663"/>
    <lineage>
        <taxon>Bacteria</taxon>
        <taxon>Pseudomonadati</taxon>
        <taxon>Pseudomonadota</taxon>
        <taxon>Gammaproteobacteria</taxon>
        <taxon>Enterobacterales</taxon>
        <taxon>Enterobacteriaceae</taxon>
        <taxon>Escherichia</taxon>
    </lineage>
</organism>
<evidence type="ECO:0000255" key="1">
    <source>
        <dbReference type="HAMAP-Rule" id="MF_01605"/>
    </source>
</evidence>
<accession>Q0TJT3</accession>
<sequence length="331" mass="36309">MKQTVYIASPESQQIHVWNLNHEGALTLTQVVDVPGQVQPMVVSPDKRYLYVGVRPEFRVLAYRIAPDDGALTFAAESALPGSPTHISTDHQGQFVFVGSYNAGNVSVTRLEDGLPVGVVDVVEGLDGCHSANISPDNRTLWVPALKQDRICLFTVSDDGHLVAQDPAEVTTVEGAGPRHMVFHPNEQYAYCVNELNSSVDVWELKDPHGNIECVQTLDMMPENFSDTRWAADIHITPDGRHLYACDRTASLITVFSVSEDGSVLSKEGFQPTETQPRGFNVDHSGKYLIAAGQKSHHISVYEIVGEEGLLHEKGRYAVGQGPMWVVVNAH</sequence>
<protein>
    <recommendedName>
        <fullName evidence="1">6-phosphogluconolactonase</fullName>
        <shortName evidence="1">6-P-gluconolactonase</shortName>
        <ecNumber evidence="1">3.1.1.31</ecNumber>
    </recommendedName>
</protein>
<name>6PGL_ECOL5</name>
<gene>
    <name evidence="1" type="primary">pgl</name>
    <name type="ordered locus">ECP_0779</name>
</gene>